<reference key="1">
    <citation type="journal article" date="2001" name="Nature">
        <title>Complete genome sequence of a multiple drug resistant Salmonella enterica serovar Typhi CT18.</title>
        <authorList>
            <person name="Parkhill J."/>
            <person name="Dougan G."/>
            <person name="James K.D."/>
            <person name="Thomson N.R."/>
            <person name="Pickard D."/>
            <person name="Wain J."/>
            <person name="Churcher C.M."/>
            <person name="Mungall K.L."/>
            <person name="Bentley S.D."/>
            <person name="Holden M.T.G."/>
            <person name="Sebaihia M."/>
            <person name="Baker S."/>
            <person name="Basham D."/>
            <person name="Brooks K."/>
            <person name="Chillingworth T."/>
            <person name="Connerton P."/>
            <person name="Cronin A."/>
            <person name="Davis P."/>
            <person name="Davies R.M."/>
            <person name="Dowd L."/>
            <person name="White N."/>
            <person name="Farrar J."/>
            <person name="Feltwell T."/>
            <person name="Hamlin N."/>
            <person name="Haque A."/>
            <person name="Hien T.T."/>
            <person name="Holroyd S."/>
            <person name="Jagels K."/>
            <person name="Krogh A."/>
            <person name="Larsen T.S."/>
            <person name="Leather S."/>
            <person name="Moule S."/>
            <person name="O'Gaora P."/>
            <person name="Parry C."/>
            <person name="Quail M.A."/>
            <person name="Rutherford K.M."/>
            <person name="Simmonds M."/>
            <person name="Skelton J."/>
            <person name="Stevens K."/>
            <person name="Whitehead S."/>
            <person name="Barrell B.G."/>
        </authorList>
    </citation>
    <scope>NUCLEOTIDE SEQUENCE [LARGE SCALE GENOMIC DNA]</scope>
    <source>
        <strain>CT18</strain>
    </source>
</reference>
<reference key="2">
    <citation type="journal article" date="2003" name="J. Bacteriol.">
        <title>Comparative genomics of Salmonella enterica serovar Typhi strains Ty2 and CT18.</title>
        <authorList>
            <person name="Deng W."/>
            <person name="Liou S.-R."/>
            <person name="Plunkett G. III"/>
            <person name="Mayhew G.F."/>
            <person name="Rose D.J."/>
            <person name="Burland V."/>
            <person name="Kodoyianni V."/>
            <person name="Schwartz D.C."/>
            <person name="Blattner F.R."/>
        </authorList>
    </citation>
    <scope>NUCLEOTIDE SEQUENCE [LARGE SCALE GENOMIC DNA]</scope>
    <source>
        <strain>ATCC 700931 / Ty2</strain>
    </source>
</reference>
<organism>
    <name type="scientific">Salmonella typhi</name>
    <dbReference type="NCBI Taxonomy" id="90370"/>
    <lineage>
        <taxon>Bacteria</taxon>
        <taxon>Pseudomonadati</taxon>
        <taxon>Pseudomonadota</taxon>
        <taxon>Gammaproteobacteria</taxon>
        <taxon>Enterobacterales</taxon>
        <taxon>Enterobacteriaceae</taxon>
        <taxon>Salmonella</taxon>
    </lineage>
</organism>
<accession>Q8Z6E7</accession>
<sequence length="428" mass="49576">MTWFIDRRLNGKNKSTVNRQRFLRRYKAQIKQSISEAINKRSVTDVDSGESVSIPTDDISEPMFHQGRGGLRHRVHPGNDHFIQNDRIERPQSGGGGGSGSGQGQASQDGEGQDEFVFQISKDEYLDLLFEDLALPNLKKNQHRQLNEYKTHRAGFTSNGVPANISVVRSLQNSLARRTAMTAGKRRELHALETELETISHSEPAQLLEEERLRREIAELRAKIERVPFIDTFDLRYKNYEKRPEPSSQAVMFCLMDVSGSMDQATKDMAKRFYILLYLFLSRTYKNVEVVYIRHHTQAKEVDEHEFFYSQETGGTIVSSALKLMDEVVKERYDPSQWNIYAAQASDGDNWADDSPLCHEILAKKLLPVVRYYSYIEITRRAHQTLWREYEHLQATFDNFAMQHIRDQEDIYPVFRELFQKQSANQSA</sequence>
<proteinExistence type="inferred from homology"/>
<dbReference type="EMBL" id="AL513382">
    <property type="protein sequence ID" value="CAD02070.1"/>
    <property type="molecule type" value="Genomic_DNA"/>
</dbReference>
<dbReference type="EMBL" id="AE014613">
    <property type="protein sequence ID" value="AAO68822.1"/>
    <property type="molecule type" value="Genomic_DNA"/>
</dbReference>
<dbReference type="RefSeq" id="NP_456227.1">
    <property type="nucleotide sequence ID" value="NC_003198.1"/>
</dbReference>
<dbReference type="RefSeq" id="WP_000219724.1">
    <property type="nucleotide sequence ID" value="NZ_WSUR01000034.1"/>
</dbReference>
<dbReference type="SMR" id="Q8Z6E7"/>
<dbReference type="STRING" id="220341.gene:17585762"/>
<dbReference type="KEGG" id="stt:t1163"/>
<dbReference type="KEGG" id="sty:STY1832"/>
<dbReference type="PATRIC" id="fig|220341.7.peg.1844"/>
<dbReference type="eggNOG" id="COG2718">
    <property type="taxonomic scope" value="Bacteria"/>
</dbReference>
<dbReference type="HOGENOM" id="CLU_049702_0_0_6"/>
<dbReference type="OMA" id="QYFAYIE"/>
<dbReference type="Proteomes" id="UP000000541">
    <property type="component" value="Chromosome"/>
</dbReference>
<dbReference type="Proteomes" id="UP000002670">
    <property type="component" value="Chromosome"/>
</dbReference>
<dbReference type="HAMAP" id="MF_01232">
    <property type="entry name" value="UPF0229"/>
    <property type="match status" value="1"/>
</dbReference>
<dbReference type="InterPro" id="IPR006698">
    <property type="entry name" value="UPF0229"/>
</dbReference>
<dbReference type="NCBIfam" id="NF003707">
    <property type="entry name" value="PRK05325.1-2"/>
    <property type="match status" value="1"/>
</dbReference>
<dbReference type="NCBIfam" id="NF003708">
    <property type="entry name" value="PRK05325.1-3"/>
    <property type="match status" value="1"/>
</dbReference>
<dbReference type="PANTHER" id="PTHR30510">
    <property type="entry name" value="UPF0229 PROTEIN YEAH"/>
    <property type="match status" value="1"/>
</dbReference>
<dbReference type="PANTHER" id="PTHR30510:SF2">
    <property type="entry name" value="UPF0229 PROTEIN YEAH"/>
    <property type="match status" value="1"/>
</dbReference>
<dbReference type="Pfam" id="PF04285">
    <property type="entry name" value="DUF444"/>
    <property type="match status" value="1"/>
</dbReference>
<evidence type="ECO:0000255" key="1">
    <source>
        <dbReference type="HAMAP-Rule" id="MF_01232"/>
    </source>
</evidence>
<evidence type="ECO:0000256" key="2">
    <source>
        <dbReference type="SAM" id="MobiDB-lite"/>
    </source>
</evidence>
<gene>
    <name evidence="1" type="primary">yeaH</name>
    <name type="ordered locus">STY1832</name>
    <name type="ordered locus">t1163</name>
</gene>
<name>YEAH_SALTI</name>
<protein>
    <recommendedName>
        <fullName evidence="1">UPF0229 protein YeaH</fullName>
    </recommendedName>
</protein>
<comment type="similarity">
    <text evidence="1">Belongs to the UPF0229 family.</text>
</comment>
<feature type="chain" id="PRO_0000068204" description="UPF0229 protein YeaH">
    <location>
        <begin position="1"/>
        <end position="428"/>
    </location>
</feature>
<feature type="region of interest" description="Disordered" evidence="2">
    <location>
        <begin position="77"/>
        <end position="111"/>
    </location>
</feature>
<feature type="compositionally biased region" description="Basic and acidic residues" evidence="2">
    <location>
        <begin position="77"/>
        <end position="90"/>
    </location>
</feature>
<feature type="compositionally biased region" description="Gly residues" evidence="2">
    <location>
        <begin position="93"/>
        <end position="103"/>
    </location>
</feature>